<organism>
    <name type="scientific">Synechococcus sp. (strain CC9311)</name>
    <dbReference type="NCBI Taxonomy" id="64471"/>
    <lineage>
        <taxon>Bacteria</taxon>
        <taxon>Bacillati</taxon>
        <taxon>Cyanobacteriota</taxon>
        <taxon>Cyanophyceae</taxon>
        <taxon>Synechococcales</taxon>
        <taxon>Synechococcaceae</taxon>
        <taxon>Synechococcus</taxon>
    </lineage>
</organism>
<evidence type="ECO:0000255" key="1">
    <source>
        <dbReference type="HAMAP-Rule" id="MF_01682"/>
    </source>
</evidence>
<accession>Q0ICL5</accession>
<name>MTND_SYNS3</name>
<reference key="1">
    <citation type="journal article" date="2006" name="Proc. Natl. Acad. Sci. U.S.A.">
        <title>Genome sequence of Synechococcus CC9311: insights into adaptation to a coastal environment.</title>
        <authorList>
            <person name="Palenik B."/>
            <person name="Ren Q."/>
            <person name="Dupont C.L."/>
            <person name="Myers G.S."/>
            <person name="Heidelberg J.F."/>
            <person name="Badger J.H."/>
            <person name="Madupu R."/>
            <person name="Nelson W.C."/>
            <person name="Brinkac L.M."/>
            <person name="Dodson R.J."/>
            <person name="Durkin A.S."/>
            <person name="Daugherty S.C."/>
            <person name="Sullivan S.A."/>
            <person name="Khouri H."/>
            <person name="Mohamoud Y."/>
            <person name="Halpin R."/>
            <person name="Paulsen I.T."/>
        </authorList>
    </citation>
    <scope>NUCLEOTIDE SEQUENCE [LARGE SCALE GENOMIC DNA]</scope>
    <source>
        <strain>CC9311</strain>
    </source>
</reference>
<feature type="chain" id="PRO_0000359239" description="Acireductone dioxygenase">
    <location>
        <begin position="1"/>
        <end position="202"/>
    </location>
</feature>
<feature type="binding site" evidence="1">
    <location>
        <position position="110"/>
    </location>
    <ligand>
        <name>Fe(2+)</name>
        <dbReference type="ChEBI" id="CHEBI:29033"/>
    </ligand>
</feature>
<feature type="binding site" evidence="1">
    <location>
        <position position="110"/>
    </location>
    <ligand>
        <name>Ni(2+)</name>
        <dbReference type="ChEBI" id="CHEBI:49786"/>
    </ligand>
</feature>
<feature type="binding site" evidence="1">
    <location>
        <position position="112"/>
    </location>
    <ligand>
        <name>Fe(2+)</name>
        <dbReference type="ChEBI" id="CHEBI:29033"/>
    </ligand>
</feature>
<feature type="binding site" evidence="1">
    <location>
        <position position="112"/>
    </location>
    <ligand>
        <name>Ni(2+)</name>
        <dbReference type="ChEBI" id="CHEBI:49786"/>
    </ligand>
</feature>
<feature type="binding site" evidence="1">
    <location>
        <position position="116"/>
    </location>
    <ligand>
        <name>Fe(2+)</name>
        <dbReference type="ChEBI" id="CHEBI:29033"/>
    </ligand>
</feature>
<feature type="binding site" evidence="1">
    <location>
        <position position="116"/>
    </location>
    <ligand>
        <name>Ni(2+)</name>
        <dbReference type="ChEBI" id="CHEBI:49786"/>
    </ligand>
</feature>
<feature type="binding site" evidence="1">
    <location>
        <position position="154"/>
    </location>
    <ligand>
        <name>Fe(2+)</name>
        <dbReference type="ChEBI" id="CHEBI:29033"/>
    </ligand>
</feature>
<feature type="binding site" evidence="1">
    <location>
        <position position="154"/>
    </location>
    <ligand>
        <name>Ni(2+)</name>
        <dbReference type="ChEBI" id="CHEBI:49786"/>
    </ligand>
</feature>
<feature type="site" description="May play a role in metal incorporation in vivo" evidence="1">
    <location>
        <position position="109"/>
    </location>
</feature>
<feature type="site" description="May play a role in transmitting local conformational changes" evidence="1">
    <location>
        <position position="115"/>
    </location>
</feature>
<feature type="site" description="Important to generate the dianion" evidence="1">
    <location>
        <position position="118"/>
    </location>
</feature>
<gene>
    <name evidence="1" type="primary">mtnD</name>
    <name type="ordered locus">sync_0589</name>
</gene>
<proteinExistence type="inferred from homology"/>
<comment type="function">
    <text evidence="1">Catalyzes 2 different reactions between oxygen and the acireductone 1,2-dihydroxy-3-keto-5-methylthiopentene (DHK-MTPene) depending upon the metal bound in the active site. Fe-containing acireductone dioxygenase (Fe-ARD) produces formate and 2-keto-4-methylthiobutyrate (KMTB), the alpha-ketoacid precursor of methionine in the methionine recycle pathway. Ni-containing acireductone dioxygenase (Ni-ARD) produces methylthiopropionate, carbon monoxide and formate, and does not lie on the methionine recycle pathway.</text>
</comment>
<comment type="catalytic activity">
    <reaction evidence="1">
        <text>1,2-dihydroxy-5-(methylsulfanyl)pent-1-en-3-one + O2 = 3-(methylsulfanyl)propanoate + CO + formate + 2 H(+)</text>
        <dbReference type="Rhea" id="RHEA:14161"/>
        <dbReference type="ChEBI" id="CHEBI:15378"/>
        <dbReference type="ChEBI" id="CHEBI:15379"/>
        <dbReference type="ChEBI" id="CHEBI:15740"/>
        <dbReference type="ChEBI" id="CHEBI:17245"/>
        <dbReference type="ChEBI" id="CHEBI:49016"/>
        <dbReference type="ChEBI" id="CHEBI:49252"/>
        <dbReference type="EC" id="1.13.11.53"/>
    </reaction>
</comment>
<comment type="catalytic activity">
    <reaction evidence="1">
        <text>1,2-dihydroxy-5-(methylsulfanyl)pent-1-en-3-one + O2 = 4-methylsulfanyl-2-oxobutanoate + formate + 2 H(+)</text>
        <dbReference type="Rhea" id="RHEA:24504"/>
        <dbReference type="ChEBI" id="CHEBI:15378"/>
        <dbReference type="ChEBI" id="CHEBI:15379"/>
        <dbReference type="ChEBI" id="CHEBI:15740"/>
        <dbReference type="ChEBI" id="CHEBI:16723"/>
        <dbReference type="ChEBI" id="CHEBI:49252"/>
        <dbReference type="EC" id="1.13.11.54"/>
    </reaction>
</comment>
<comment type="cofactor">
    <cofactor evidence="1">
        <name>Fe(2+)</name>
        <dbReference type="ChEBI" id="CHEBI:29033"/>
    </cofactor>
    <text evidence="1">Binds 1 Fe(2+) cation per monomer.</text>
</comment>
<comment type="cofactor">
    <cofactor evidence="1">
        <name>Ni(2+)</name>
        <dbReference type="ChEBI" id="CHEBI:49786"/>
    </cofactor>
    <text evidence="1">Binds 1 nickel ion per monomer.</text>
</comment>
<comment type="pathway">
    <text evidence="1">Amino-acid biosynthesis; L-methionine biosynthesis via salvage pathway; L-methionine from S-methyl-5-thio-alpha-D-ribose 1-phosphate: step 5/6.</text>
</comment>
<comment type="subunit">
    <text evidence="1">Monomer.</text>
</comment>
<comment type="similarity">
    <text evidence="1">Belongs to the acireductone dioxygenase (ARD) family.</text>
</comment>
<protein>
    <recommendedName>
        <fullName evidence="1">Acireductone dioxygenase</fullName>
    </recommendedName>
    <alternativeName>
        <fullName evidence="1">1,2-dihydroxy-3-keto-5-methylthiopentene dioxygenase</fullName>
        <shortName evidence="1">DHK-MTPene dioxygenase</shortName>
    </alternativeName>
    <alternativeName>
        <fullName evidence="1">Acireductone dioxygenase (Fe(2+)-requiring)</fullName>
        <shortName evidence="1">ARD'</shortName>
        <shortName evidence="1">Fe-ARD</shortName>
        <ecNumber evidence="1">1.13.11.54</ecNumber>
    </alternativeName>
    <alternativeName>
        <fullName evidence="1">Acireductone dioxygenase (Ni(2+)-requiring)</fullName>
        <shortName evidence="1">ARD</shortName>
        <shortName evidence="1">Ni-ARD</shortName>
        <ecNumber evidence="1">1.13.11.53</ecNumber>
    </alternativeName>
</protein>
<keyword id="KW-0028">Amino-acid biosynthesis</keyword>
<keyword id="KW-0223">Dioxygenase</keyword>
<keyword id="KW-0408">Iron</keyword>
<keyword id="KW-0479">Metal-binding</keyword>
<keyword id="KW-0486">Methionine biosynthesis</keyword>
<keyword id="KW-0533">Nickel</keyword>
<keyword id="KW-0560">Oxidoreductase</keyword>
<keyword id="KW-1185">Reference proteome</keyword>
<sequence>MTELRIYATRGAGVEADRDSAVAAAPEALLSTSNAEQISAQLKTRGIKFQRWPSKPKLEQGAMQEQILEAYASLIASVQKNEGYQTVDVMRVERDQISGSTLRQTFRQEHQHAEDEVRFFVEGCGLFALHIKDEVLQVICEANDWIAIPAGTRHWFDMGVDPNYCVIRFFKNSGGWAASFTHDPIADHYPGLDQARKQTTQG</sequence>
<dbReference type="EC" id="1.13.11.54" evidence="1"/>
<dbReference type="EC" id="1.13.11.53" evidence="1"/>
<dbReference type="EMBL" id="CP000435">
    <property type="protein sequence ID" value="ABI47203.1"/>
    <property type="molecule type" value="Genomic_DNA"/>
</dbReference>
<dbReference type="RefSeq" id="WP_011618534.1">
    <property type="nucleotide sequence ID" value="NC_008319.1"/>
</dbReference>
<dbReference type="SMR" id="Q0ICL5"/>
<dbReference type="STRING" id="64471.sync_0589"/>
<dbReference type="KEGG" id="syg:sync_0589"/>
<dbReference type="eggNOG" id="COG1791">
    <property type="taxonomic scope" value="Bacteria"/>
</dbReference>
<dbReference type="HOGENOM" id="CLU_125400_0_0_3"/>
<dbReference type="OrthoDB" id="9795636at2"/>
<dbReference type="UniPathway" id="UPA00904">
    <property type="reaction ID" value="UER00878"/>
</dbReference>
<dbReference type="Proteomes" id="UP000001961">
    <property type="component" value="Chromosome"/>
</dbReference>
<dbReference type="GO" id="GO:0010308">
    <property type="term" value="F:acireductone dioxygenase (Ni2+-requiring) activity"/>
    <property type="evidence" value="ECO:0007669"/>
    <property type="project" value="UniProtKB-UniRule"/>
</dbReference>
<dbReference type="GO" id="GO:0010309">
    <property type="term" value="F:acireductone dioxygenase [iron(II)-requiring] activity"/>
    <property type="evidence" value="ECO:0007669"/>
    <property type="project" value="UniProtKB-UniRule"/>
</dbReference>
<dbReference type="GO" id="GO:0005506">
    <property type="term" value="F:iron ion binding"/>
    <property type="evidence" value="ECO:0007669"/>
    <property type="project" value="UniProtKB-UniRule"/>
</dbReference>
<dbReference type="GO" id="GO:0016151">
    <property type="term" value="F:nickel cation binding"/>
    <property type="evidence" value="ECO:0007669"/>
    <property type="project" value="UniProtKB-UniRule"/>
</dbReference>
<dbReference type="GO" id="GO:0019509">
    <property type="term" value="P:L-methionine salvage from methylthioadenosine"/>
    <property type="evidence" value="ECO:0007669"/>
    <property type="project" value="UniProtKB-UniRule"/>
</dbReference>
<dbReference type="GO" id="GO:0019284">
    <property type="term" value="P:L-methionine salvage from S-adenosylmethionine"/>
    <property type="evidence" value="ECO:0007669"/>
    <property type="project" value="InterPro"/>
</dbReference>
<dbReference type="CDD" id="cd02232">
    <property type="entry name" value="cupin_ARD"/>
    <property type="match status" value="1"/>
</dbReference>
<dbReference type="Gene3D" id="2.60.120.10">
    <property type="entry name" value="Jelly Rolls"/>
    <property type="match status" value="1"/>
</dbReference>
<dbReference type="HAMAP" id="MF_01682">
    <property type="entry name" value="Salvage_MtnD"/>
    <property type="match status" value="1"/>
</dbReference>
<dbReference type="InterPro" id="IPR004313">
    <property type="entry name" value="ARD"/>
</dbReference>
<dbReference type="InterPro" id="IPR023956">
    <property type="entry name" value="ARD_bac"/>
</dbReference>
<dbReference type="InterPro" id="IPR014710">
    <property type="entry name" value="RmlC-like_jellyroll"/>
</dbReference>
<dbReference type="InterPro" id="IPR011051">
    <property type="entry name" value="RmlC_Cupin_sf"/>
</dbReference>
<dbReference type="PANTHER" id="PTHR23418">
    <property type="entry name" value="ACIREDUCTONE DIOXYGENASE"/>
    <property type="match status" value="1"/>
</dbReference>
<dbReference type="PANTHER" id="PTHR23418:SF0">
    <property type="entry name" value="ACIREDUCTONE DIOXYGENASE"/>
    <property type="match status" value="1"/>
</dbReference>
<dbReference type="Pfam" id="PF03079">
    <property type="entry name" value="ARD"/>
    <property type="match status" value="1"/>
</dbReference>
<dbReference type="SUPFAM" id="SSF51182">
    <property type="entry name" value="RmlC-like cupins"/>
    <property type="match status" value="1"/>
</dbReference>